<accession>A8D888</accession>
<protein>
    <recommendedName>
        <fullName>Ubiquitin-fold modifier 1</fullName>
    </recommendedName>
</protein>
<feature type="chain" id="PRO_0000391997" description="Ubiquitin-fold modifier 1">
    <location>
        <begin position="1"/>
        <end position="84"/>
    </location>
</feature>
<feature type="propeptide" id="PRO_0000391998" description="Removed in mature form" evidence="1">
    <location>
        <begin position="85"/>
        <end position="98"/>
    </location>
</feature>
<feature type="cross-link" description="Glycyl lysine isopeptide (Gly-Lys) (interchain with K-? in acceptor proteins)" evidence="2">
    <location>
        <position position="84"/>
    </location>
</feature>
<reference key="1">
    <citation type="submission" date="2007-09" db="EMBL/GenBank/DDBJ databases">
        <title>Isolation of an mRNA for ubiquitin-fold modifier 1 precursor (UFM1) protein from Artemia franciscana.</title>
        <authorList>
            <person name="Il Grande A."/>
            <person name="Brick J."/>
            <person name="Vershon A.K."/>
            <person name="Nemeroff M.E."/>
        </authorList>
    </citation>
    <scope>NUCLEOTIDE SEQUENCE [MRNA]</scope>
</reference>
<organism>
    <name type="scientific">Artemia franciscana</name>
    <name type="common">Brine shrimp</name>
    <name type="synonym">Artemia sanfranciscana</name>
    <dbReference type="NCBI Taxonomy" id="6661"/>
    <lineage>
        <taxon>Eukaryota</taxon>
        <taxon>Metazoa</taxon>
        <taxon>Ecdysozoa</taxon>
        <taxon>Arthropoda</taxon>
        <taxon>Crustacea</taxon>
        <taxon>Branchiopoda</taxon>
        <taxon>Anostraca</taxon>
        <taxon>Artemiidae</taxon>
        <taxon>Artemia</taxon>
    </lineage>
</organism>
<sequence>MGSKVTFKITLTSDPKLPFKVLSVPEATPLTAVLKFAAEEFRVPAATSAIITDDGAGINPQQTAGNVFLKHGSELRLIPRDRVGFTTTYHSSLNVCLF</sequence>
<proteinExistence type="inferred from homology"/>
<comment type="function">
    <text evidence="1">Ubiquitin-like modifier protein which binds to a number of as yet unidentified target proteins.</text>
</comment>
<comment type="similarity">
    <text evidence="3">Belongs to the UFM1 family.</text>
</comment>
<name>UFM1_ARTSF</name>
<keyword id="KW-1017">Isopeptide bond</keyword>
<keyword id="KW-0833">Ubl conjugation pathway</keyword>
<dbReference type="EMBL" id="EU142262">
    <property type="protein sequence ID" value="ABV60398.1"/>
    <property type="molecule type" value="mRNA"/>
</dbReference>
<dbReference type="SMR" id="A8D888"/>
<dbReference type="GO" id="GO:0005737">
    <property type="term" value="C:cytoplasm"/>
    <property type="evidence" value="ECO:0007669"/>
    <property type="project" value="TreeGrafter"/>
</dbReference>
<dbReference type="GO" id="GO:0005634">
    <property type="term" value="C:nucleus"/>
    <property type="evidence" value="ECO:0007669"/>
    <property type="project" value="TreeGrafter"/>
</dbReference>
<dbReference type="GO" id="GO:1990592">
    <property type="term" value="P:protein K69-linked ufmylation"/>
    <property type="evidence" value="ECO:0007669"/>
    <property type="project" value="TreeGrafter"/>
</dbReference>
<dbReference type="CDD" id="cd01766">
    <property type="entry name" value="Ubl_UFM1"/>
    <property type="match status" value="1"/>
</dbReference>
<dbReference type="FunFam" id="3.10.20.90:FF:000044">
    <property type="entry name" value="Ubiquitin-fold modifier 1"/>
    <property type="match status" value="1"/>
</dbReference>
<dbReference type="Gene3D" id="3.10.20.90">
    <property type="entry name" value="Phosphatidylinositol 3-kinase Catalytic Subunit, Chain A, domain 1"/>
    <property type="match status" value="1"/>
</dbReference>
<dbReference type="InterPro" id="IPR029071">
    <property type="entry name" value="Ubiquitin-like_domsf"/>
</dbReference>
<dbReference type="InterPro" id="IPR005375">
    <property type="entry name" value="UFM1"/>
</dbReference>
<dbReference type="PANTHER" id="PTHR15825">
    <property type="entry name" value="UBIQUITIN-FOLD MODIFIER 1"/>
    <property type="match status" value="1"/>
</dbReference>
<dbReference type="PANTHER" id="PTHR15825:SF0">
    <property type="entry name" value="UBIQUITIN-FOLD MODIFIER 1"/>
    <property type="match status" value="1"/>
</dbReference>
<dbReference type="Pfam" id="PF03671">
    <property type="entry name" value="Ufm1"/>
    <property type="match status" value="1"/>
</dbReference>
<dbReference type="PIRSF" id="PIRSF038027">
    <property type="entry name" value="Ubiquitin-like_Ufm1"/>
    <property type="match status" value="1"/>
</dbReference>
<dbReference type="SUPFAM" id="SSF54236">
    <property type="entry name" value="Ubiquitin-like"/>
    <property type="match status" value="1"/>
</dbReference>
<evidence type="ECO:0000250" key="1"/>
<evidence type="ECO:0000255" key="2"/>
<evidence type="ECO:0000305" key="3"/>